<comment type="function">
    <text evidence="1">Catalyzes the conversion of 3'-phosphate to a 2',3'-cyclic phosphodiester at the end of RNA. The mechanism of action of the enzyme occurs in 3 steps: (A) adenylation of the enzyme by ATP; (B) transfer of adenylate to an RNA-N3'P to produce RNA-N3'PP5'A; (C) and attack of the adjacent 2'-hydroxyl on the 3'-phosphorus in the diester linkage to produce the cyclic end product. The biological role of this enzyme is unknown but it is likely to function in some aspects of cellular RNA processing (By similarity).</text>
</comment>
<comment type="catalytic activity">
    <reaction>
        <text>a 3'-end 3'-phospho-ribonucleotide-RNA + ATP = a 3'-end 2',3'-cyclophospho-ribonucleotide-RNA + AMP + diphosphate</text>
        <dbReference type="Rhea" id="RHEA:23976"/>
        <dbReference type="Rhea" id="RHEA-COMP:10463"/>
        <dbReference type="Rhea" id="RHEA-COMP:10464"/>
        <dbReference type="ChEBI" id="CHEBI:30616"/>
        <dbReference type="ChEBI" id="CHEBI:33019"/>
        <dbReference type="ChEBI" id="CHEBI:83062"/>
        <dbReference type="ChEBI" id="CHEBI:83064"/>
        <dbReference type="ChEBI" id="CHEBI:456215"/>
        <dbReference type="EC" id="6.5.1.4"/>
    </reaction>
</comment>
<comment type="subcellular location">
    <subcellularLocation>
        <location evidence="2">Cytoplasm</location>
    </subcellularLocation>
</comment>
<comment type="similarity">
    <text evidence="2">Belongs to the RNA 3'-terminal cyclase family. Type 1 subfamily.</text>
</comment>
<accession>O28837</accession>
<sequence length="328" mass="35454">MIEIDGSFGEGGGQILRTAVALSCVTGKAVRIRNIRANRPKPGLAAQHLKGIEAAKIISNAEVEGLRIGSTEIVFNPGSVRGGNFRVDIGTAGSVTLIFQTVLLPLLFADRDSTLTVTGGTDVAWAPPVDYFKNVTLRALREMGAECELEVLKRGYYPKGGGMVRLTVRPAEMKGVVYERIDEIVRGVSHCQNLPGHVAERQASSARNFLEERGIRAEIRTEVLKGLSTGSGIVLWSGYKGGSALGERGKRAEVVGQEAAESLYRELMSDAAFDAHLADQVMPFAAMARGRTEYTTSEVTMHQKSNAYVINTFLGKVVKFEGNKIIIK</sequence>
<proteinExistence type="inferred from homology"/>
<evidence type="ECO:0000250" key="1"/>
<evidence type="ECO:0000305" key="2"/>
<feature type="chain" id="PRO_0000156423" description="RNA 3'-terminal phosphate cyclase">
    <location>
        <begin position="1"/>
        <end position="328"/>
    </location>
</feature>
<feature type="active site" description="Tele-AMP-histidine intermediate" evidence="1">
    <location>
        <position position="302"/>
    </location>
</feature>
<feature type="binding site" evidence="1">
    <location>
        <position position="100"/>
    </location>
    <ligand>
        <name>ATP</name>
        <dbReference type="ChEBI" id="CHEBI:30616"/>
    </ligand>
</feature>
<feature type="binding site" evidence="1">
    <location>
        <begin position="276"/>
        <end position="280"/>
    </location>
    <ligand>
        <name>ATP</name>
        <dbReference type="ChEBI" id="CHEBI:30616"/>
    </ligand>
</feature>
<reference key="1">
    <citation type="journal article" date="1997" name="Nature">
        <title>The complete genome sequence of the hyperthermophilic, sulphate-reducing archaeon Archaeoglobus fulgidus.</title>
        <authorList>
            <person name="Klenk H.-P."/>
            <person name="Clayton R.A."/>
            <person name="Tomb J.-F."/>
            <person name="White O."/>
            <person name="Nelson K.E."/>
            <person name="Ketchum K.A."/>
            <person name="Dodson R.J."/>
            <person name="Gwinn M.L."/>
            <person name="Hickey E.K."/>
            <person name="Peterson J.D."/>
            <person name="Richardson D.L."/>
            <person name="Kerlavage A.R."/>
            <person name="Graham D.E."/>
            <person name="Kyrpides N.C."/>
            <person name="Fleischmann R.D."/>
            <person name="Quackenbush J."/>
            <person name="Lee N.H."/>
            <person name="Sutton G.G."/>
            <person name="Gill S.R."/>
            <person name="Kirkness E.F."/>
            <person name="Dougherty B.A."/>
            <person name="McKenney K."/>
            <person name="Adams M.D."/>
            <person name="Loftus B.J."/>
            <person name="Peterson S.N."/>
            <person name="Reich C.I."/>
            <person name="McNeil L.K."/>
            <person name="Badger J.H."/>
            <person name="Glodek A."/>
            <person name="Zhou L."/>
            <person name="Overbeek R."/>
            <person name="Gocayne J.D."/>
            <person name="Weidman J.F."/>
            <person name="McDonald L.A."/>
            <person name="Utterback T.R."/>
            <person name="Cotton M.D."/>
            <person name="Spriggs T."/>
            <person name="Artiach P."/>
            <person name="Kaine B.P."/>
            <person name="Sykes S.M."/>
            <person name="Sadow P.W."/>
            <person name="D'Andrea K.P."/>
            <person name="Bowman C."/>
            <person name="Fujii C."/>
            <person name="Garland S.A."/>
            <person name="Mason T.M."/>
            <person name="Olsen G.J."/>
            <person name="Fraser C.M."/>
            <person name="Smith H.O."/>
            <person name="Woese C.R."/>
            <person name="Venter J.C."/>
        </authorList>
    </citation>
    <scope>NUCLEOTIDE SEQUENCE [LARGE SCALE GENOMIC DNA]</scope>
    <source>
        <strain>ATCC 49558 / DSM 4304 / JCM 9628 / NBRC 100126 / VC-16</strain>
    </source>
</reference>
<gene>
    <name type="primary">rtcA</name>
    <name type="ordered locus">AF_1435</name>
</gene>
<dbReference type="EC" id="6.5.1.4"/>
<dbReference type="EMBL" id="AE000782">
    <property type="protein sequence ID" value="AAB89810.1"/>
    <property type="molecule type" value="Genomic_DNA"/>
</dbReference>
<dbReference type="PIR" id="B69429">
    <property type="entry name" value="B69429"/>
</dbReference>
<dbReference type="RefSeq" id="WP_010878932.1">
    <property type="nucleotide sequence ID" value="NC_000917.1"/>
</dbReference>
<dbReference type="SMR" id="O28837"/>
<dbReference type="STRING" id="224325.AF_1435"/>
<dbReference type="PaxDb" id="224325-AF_1435"/>
<dbReference type="EnsemblBacteria" id="AAB89810">
    <property type="protein sequence ID" value="AAB89810"/>
    <property type="gene ID" value="AF_1435"/>
</dbReference>
<dbReference type="GeneID" id="24795047"/>
<dbReference type="KEGG" id="afu:AF_1435"/>
<dbReference type="eggNOG" id="arCOG04125">
    <property type="taxonomic scope" value="Archaea"/>
</dbReference>
<dbReference type="HOGENOM" id="CLU_027882_0_0_2"/>
<dbReference type="OrthoDB" id="7994at2157"/>
<dbReference type="PhylomeDB" id="O28837"/>
<dbReference type="Proteomes" id="UP000002199">
    <property type="component" value="Chromosome"/>
</dbReference>
<dbReference type="GO" id="GO:0005737">
    <property type="term" value="C:cytoplasm"/>
    <property type="evidence" value="ECO:0007669"/>
    <property type="project" value="UniProtKB-SubCell"/>
</dbReference>
<dbReference type="GO" id="GO:0005524">
    <property type="term" value="F:ATP binding"/>
    <property type="evidence" value="ECO:0007669"/>
    <property type="project" value="UniProtKB-KW"/>
</dbReference>
<dbReference type="GO" id="GO:0003963">
    <property type="term" value="F:RNA-3'-phosphate cyclase activity"/>
    <property type="evidence" value="ECO:0007669"/>
    <property type="project" value="UniProtKB-UniRule"/>
</dbReference>
<dbReference type="GO" id="GO:0006396">
    <property type="term" value="P:RNA processing"/>
    <property type="evidence" value="ECO:0007669"/>
    <property type="project" value="InterPro"/>
</dbReference>
<dbReference type="CDD" id="cd00874">
    <property type="entry name" value="RNA_Cyclase_Class_II"/>
    <property type="match status" value="1"/>
</dbReference>
<dbReference type="Gene3D" id="3.65.10.20">
    <property type="entry name" value="RNA 3'-terminal phosphate cyclase domain"/>
    <property type="match status" value="1"/>
</dbReference>
<dbReference type="Gene3D" id="3.30.360.20">
    <property type="entry name" value="RNA 3'-terminal phosphate cyclase, insert domain"/>
    <property type="match status" value="1"/>
</dbReference>
<dbReference type="HAMAP" id="MF_00200">
    <property type="entry name" value="RTC"/>
    <property type="match status" value="1"/>
</dbReference>
<dbReference type="InterPro" id="IPR013791">
    <property type="entry name" value="RNA3'-term_phos_cycl_insert"/>
</dbReference>
<dbReference type="InterPro" id="IPR023797">
    <property type="entry name" value="RNA3'_phos_cyclase_dom"/>
</dbReference>
<dbReference type="InterPro" id="IPR037136">
    <property type="entry name" value="RNA3'_phos_cyclase_dom_sf"/>
</dbReference>
<dbReference type="InterPro" id="IPR000228">
    <property type="entry name" value="RNA3'_term_phos_cyc"/>
</dbReference>
<dbReference type="InterPro" id="IPR017770">
    <property type="entry name" value="RNA3'_term_phos_cyc_type_1"/>
</dbReference>
<dbReference type="InterPro" id="IPR020719">
    <property type="entry name" value="RNA3'_term_phos_cycl-like_CS"/>
</dbReference>
<dbReference type="InterPro" id="IPR013792">
    <property type="entry name" value="RNA3'P_cycl/enolpyr_Trfase_a/b"/>
</dbReference>
<dbReference type="InterPro" id="IPR036553">
    <property type="entry name" value="RPTC_insert"/>
</dbReference>
<dbReference type="NCBIfam" id="TIGR03399">
    <property type="entry name" value="RNA_3prim_cycl"/>
    <property type="match status" value="1"/>
</dbReference>
<dbReference type="PANTHER" id="PTHR11096">
    <property type="entry name" value="RNA 3' TERMINAL PHOSPHATE CYCLASE"/>
    <property type="match status" value="1"/>
</dbReference>
<dbReference type="PANTHER" id="PTHR11096:SF0">
    <property type="entry name" value="RNA 3'-TERMINAL PHOSPHATE CYCLASE"/>
    <property type="match status" value="1"/>
</dbReference>
<dbReference type="Pfam" id="PF01137">
    <property type="entry name" value="RTC"/>
    <property type="match status" value="1"/>
</dbReference>
<dbReference type="Pfam" id="PF05189">
    <property type="entry name" value="RTC_insert"/>
    <property type="match status" value="1"/>
</dbReference>
<dbReference type="PIRSF" id="PIRSF005378">
    <property type="entry name" value="RNA3'_term_phos_cycl_euk"/>
    <property type="match status" value="1"/>
</dbReference>
<dbReference type="SUPFAM" id="SSF55205">
    <property type="entry name" value="EPT/RTPC-like"/>
    <property type="match status" value="1"/>
</dbReference>
<dbReference type="PROSITE" id="PS01287">
    <property type="entry name" value="RTC"/>
    <property type="match status" value="1"/>
</dbReference>
<protein>
    <recommendedName>
        <fullName>RNA 3'-terminal phosphate cyclase</fullName>
        <shortName>RNA cyclase</shortName>
        <shortName>RNA-3'-phosphate cyclase</shortName>
        <ecNumber>6.5.1.4</ecNumber>
    </recommendedName>
</protein>
<name>RTCA_ARCFU</name>
<organism>
    <name type="scientific">Archaeoglobus fulgidus (strain ATCC 49558 / DSM 4304 / JCM 9628 / NBRC 100126 / VC-16)</name>
    <dbReference type="NCBI Taxonomy" id="224325"/>
    <lineage>
        <taxon>Archaea</taxon>
        <taxon>Methanobacteriati</taxon>
        <taxon>Methanobacteriota</taxon>
        <taxon>Archaeoglobi</taxon>
        <taxon>Archaeoglobales</taxon>
        <taxon>Archaeoglobaceae</taxon>
        <taxon>Archaeoglobus</taxon>
    </lineage>
</organism>
<keyword id="KW-0067">ATP-binding</keyword>
<keyword id="KW-0963">Cytoplasm</keyword>
<keyword id="KW-0436">Ligase</keyword>
<keyword id="KW-0547">Nucleotide-binding</keyword>
<keyword id="KW-1185">Reference proteome</keyword>